<name>HIS7_PYRFU</name>
<feature type="chain" id="PRO_0000158195" description="Imidazoleglycerol-phosphate dehydratase">
    <location>
        <begin position="1"/>
        <end position="176"/>
    </location>
</feature>
<feature type="strand" evidence="2">
    <location>
        <begin position="2"/>
        <end position="4"/>
    </location>
</feature>
<feature type="strand" evidence="2">
    <location>
        <begin position="6"/>
        <end position="14"/>
    </location>
</feature>
<feature type="helix" evidence="2">
    <location>
        <begin position="25"/>
        <end position="38"/>
    </location>
</feature>
<feature type="strand" evidence="2">
    <location>
        <begin position="42"/>
        <end position="50"/>
    </location>
</feature>
<feature type="helix" evidence="2">
    <location>
        <begin position="51"/>
        <end position="69"/>
    </location>
</feature>
<feature type="strand" evidence="2">
    <location>
        <begin position="72"/>
        <end position="74"/>
    </location>
</feature>
<feature type="strand" evidence="2">
    <location>
        <begin position="77"/>
        <end position="84"/>
    </location>
</feature>
<feature type="strand" evidence="2">
    <location>
        <begin position="87"/>
        <end position="94"/>
    </location>
</feature>
<feature type="strand" evidence="2">
    <location>
        <begin position="100"/>
        <end position="104"/>
    </location>
</feature>
<feature type="helix" evidence="2">
    <location>
        <begin position="116"/>
        <end position="130"/>
    </location>
</feature>
<feature type="strand" evidence="2">
    <location>
        <begin position="133"/>
        <end position="140"/>
    </location>
</feature>
<feature type="helix" evidence="2">
    <location>
        <begin position="144"/>
        <end position="162"/>
    </location>
</feature>
<comment type="catalytic activity">
    <reaction evidence="1">
        <text>D-erythro-1-(imidazol-4-yl)glycerol 3-phosphate = 3-(imidazol-4-yl)-2-oxopropyl phosphate + H2O</text>
        <dbReference type="Rhea" id="RHEA:11040"/>
        <dbReference type="ChEBI" id="CHEBI:15377"/>
        <dbReference type="ChEBI" id="CHEBI:57766"/>
        <dbReference type="ChEBI" id="CHEBI:58278"/>
        <dbReference type="EC" id="4.2.1.19"/>
    </reaction>
</comment>
<comment type="pathway">
    <text evidence="1">Amino-acid biosynthesis; L-histidine biosynthesis; L-histidine from 5-phospho-alpha-D-ribose 1-diphosphate: step 6/9.</text>
</comment>
<comment type="subcellular location">
    <subcellularLocation>
        <location evidence="1">Cytoplasm</location>
    </subcellularLocation>
</comment>
<comment type="similarity">
    <text evidence="1">Belongs to the imidazoleglycerol-phosphate dehydratase family.</text>
</comment>
<evidence type="ECO:0000255" key="1">
    <source>
        <dbReference type="HAMAP-Rule" id="MF_00076"/>
    </source>
</evidence>
<evidence type="ECO:0007829" key="2">
    <source>
        <dbReference type="PDB" id="5DNL"/>
    </source>
</evidence>
<organism>
    <name type="scientific">Pyrococcus furiosus (strain ATCC 43587 / DSM 3638 / JCM 8422 / Vc1)</name>
    <dbReference type="NCBI Taxonomy" id="186497"/>
    <lineage>
        <taxon>Archaea</taxon>
        <taxon>Methanobacteriati</taxon>
        <taxon>Methanobacteriota</taxon>
        <taxon>Thermococci</taxon>
        <taxon>Thermococcales</taxon>
        <taxon>Thermococcaceae</taxon>
        <taxon>Pyrococcus</taxon>
    </lineage>
</organism>
<protein>
    <recommendedName>
        <fullName evidence="1">Imidazoleglycerol-phosphate dehydratase</fullName>
        <shortName evidence="1">IGPD</shortName>
        <ecNumber evidence="1">4.2.1.19</ecNumber>
    </recommendedName>
</protein>
<keyword id="KW-0002">3D-structure</keyword>
<keyword id="KW-0028">Amino-acid biosynthesis</keyword>
<keyword id="KW-0963">Cytoplasm</keyword>
<keyword id="KW-0368">Histidine biosynthesis</keyword>
<keyword id="KW-0456">Lyase</keyword>
<keyword id="KW-1185">Reference proteome</keyword>
<dbReference type="EC" id="4.2.1.19" evidence="1"/>
<dbReference type="EMBL" id="AE009950">
    <property type="protein sequence ID" value="AAL81784.1"/>
    <property type="molecule type" value="Genomic_DNA"/>
</dbReference>
<dbReference type="RefSeq" id="WP_011012806.1">
    <property type="nucleotide sequence ID" value="NZ_CP023154.1"/>
</dbReference>
<dbReference type="PDB" id="5DNL">
    <property type="method" value="X-ray"/>
    <property type="resolution" value="1.53 A"/>
    <property type="chains" value="A/B/C=1-176"/>
</dbReference>
<dbReference type="PDB" id="5DNX">
    <property type="method" value="X-ray"/>
    <property type="resolution" value="1.80 A"/>
    <property type="chains" value="A/B/C=1-176"/>
</dbReference>
<dbReference type="PDBsum" id="5DNL"/>
<dbReference type="PDBsum" id="5DNX"/>
<dbReference type="SMR" id="P58880"/>
<dbReference type="STRING" id="186497.PF1660"/>
<dbReference type="PaxDb" id="186497-PF1660"/>
<dbReference type="GeneID" id="41713488"/>
<dbReference type="KEGG" id="pfu:PF1660"/>
<dbReference type="PATRIC" id="fig|186497.12.peg.1726"/>
<dbReference type="eggNOG" id="arCOG04398">
    <property type="taxonomic scope" value="Archaea"/>
</dbReference>
<dbReference type="HOGENOM" id="CLU_044308_2_1_2"/>
<dbReference type="OrthoDB" id="103579at2157"/>
<dbReference type="PhylomeDB" id="P58880"/>
<dbReference type="UniPathway" id="UPA00031">
    <property type="reaction ID" value="UER00011"/>
</dbReference>
<dbReference type="Proteomes" id="UP000001013">
    <property type="component" value="Chromosome"/>
</dbReference>
<dbReference type="GO" id="GO:0005737">
    <property type="term" value="C:cytoplasm"/>
    <property type="evidence" value="ECO:0007669"/>
    <property type="project" value="UniProtKB-SubCell"/>
</dbReference>
<dbReference type="GO" id="GO:0004424">
    <property type="term" value="F:imidazoleglycerol-phosphate dehydratase activity"/>
    <property type="evidence" value="ECO:0007669"/>
    <property type="project" value="UniProtKB-UniRule"/>
</dbReference>
<dbReference type="GO" id="GO:0000105">
    <property type="term" value="P:L-histidine biosynthetic process"/>
    <property type="evidence" value="ECO:0007669"/>
    <property type="project" value="UniProtKB-UniRule"/>
</dbReference>
<dbReference type="FunFam" id="3.30.230.40:FF:000001">
    <property type="entry name" value="Imidazoleglycerol-phosphate dehydratase HisB"/>
    <property type="match status" value="1"/>
</dbReference>
<dbReference type="Gene3D" id="3.30.230.40">
    <property type="entry name" value="Imidazole glycerol phosphate dehydratase, domain 1"/>
    <property type="match status" value="2"/>
</dbReference>
<dbReference type="HAMAP" id="MF_00076">
    <property type="entry name" value="HisB"/>
    <property type="match status" value="1"/>
</dbReference>
<dbReference type="InterPro" id="IPR038494">
    <property type="entry name" value="IGPD_sf"/>
</dbReference>
<dbReference type="InterPro" id="IPR000807">
    <property type="entry name" value="ImidazoleglycerolP_deHydtase"/>
</dbReference>
<dbReference type="InterPro" id="IPR020565">
    <property type="entry name" value="ImidazoleglycerP_deHydtase_CS"/>
</dbReference>
<dbReference type="InterPro" id="IPR020568">
    <property type="entry name" value="Ribosomal_Su5_D2-typ_SF"/>
</dbReference>
<dbReference type="NCBIfam" id="NF002114">
    <property type="entry name" value="PRK00951.2-4"/>
    <property type="match status" value="1"/>
</dbReference>
<dbReference type="PANTHER" id="PTHR23133:SF2">
    <property type="entry name" value="IMIDAZOLEGLYCEROL-PHOSPHATE DEHYDRATASE"/>
    <property type="match status" value="1"/>
</dbReference>
<dbReference type="PANTHER" id="PTHR23133">
    <property type="entry name" value="IMIDAZOLEGLYCEROL-PHOSPHATE DEHYDRATASE HIS7"/>
    <property type="match status" value="1"/>
</dbReference>
<dbReference type="Pfam" id="PF00475">
    <property type="entry name" value="IGPD"/>
    <property type="match status" value="1"/>
</dbReference>
<dbReference type="SUPFAM" id="SSF54211">
    <property type="entry name" value="Ribosomal protein S5 domain 2-like"/>
    <property type="match status" value="2"/>
</dbReference>
<dbReference type="PROSITE" id="PS00955">
    <property type="entry name" value="IGP_DEHYDRATASE_2"/>
    <property type="match status" value="1"/>
</dbReference>
<reference key="1">
    <citation type="journal article" date="1999" name="Genetics">
        <title>Divergence of the hyperthermophilic archaea Pyrococcus furiosus and P. horikoshii inferred from complete genomic sequences.</title>
        <authorList>
            <person name="Maeder D.L."/>
            <person name="Weiss R.B."/>
            <person name="Dunn D.M."/>
            <person name="Cherry J.L."/>
            <person name="Gonzalez J.M."/>
            <person name="DiRuggiero J."/>
            <person name="Robb F.T."/>
        </authorList>
    </citation>
    <scope>NUCLEOTIDE SEQUENCE [LARGE SCALE GENOMIC DNA]</scope>
    <source>
        <strain>ATCC 43587 / DSM 3638 / JCM 8422 / Vc1</strain>
    </source>
</reference>
<proteinExistence type="evidence at protein level"/>
<sequence length="176" mass="19736">MRRTTKETDIIVEIGKKGEIKTNDLILDHMLTAFAFYLGKDMRITATYDLRHHLWEDIGITLGEALRENLPEKFTRFGNAIMPMDDALVLVSVDISNRPYANVDVNIKDAEEGFAVSLLKEFVWGLARGLRATIHIKQLSGENAHHIVEAAFKGLGMALRVATKESERVESTKGVL</sequence>
<accession>P58880</accession>
<gene>
    <name evidence="1" type="primary">hisB</name>
    <name type="ordered locus">PF1660</name>
</gene>